<proteinExistence type="evidence at transcript level"/>
<dbReference type="EMBL" id="BC072982">
    <property type="status" value="NOT_ANNOTATED_CDS"/>
    <property type="molecule type" value="mRNA"/>
</dbReference>
<dbReference type="EMBL" id="BC097610">
    <property type="status" value="NOT_ANNOTATED_CDS"/>
    <property type="molecule type" value="mRNA"/>
</dbReference>
<dbReference type="EMBL" id="BC106679">
    <property type="status" value="NOT_ANNOTATED_CDS"/>
    <property type="molecule type" value="mRNA"/>
</dbReference>
<dbReference type="EMBL" id="BC128920">
    <property type="status" value="NOT_ANNOTATED_CDS"/>
    <property type="molecule type" value="mRNA"/>
</dbReference>
<dbReference type="SMR" id="Q3KPL3"/>
<dbReference type="AGR" id="Xenbase:XB-GENE-940237"/>
<dbReference type="Xenbase" id="XB-GENE-940237">
    <property type="gene designation" value="lysmd2.L"/>
</dbReference>
<dbReference type="Proteomes" id="UP000186698">
    <property type="component" value="Unplaced"/>
</dbReference>
<dbReference type="CDD" id="cd00118">
    <property type="entry name" value="LysM"/>
    <property type="match status" value="1"/>
</dbReference>
<dbReference type="Gene3D" id="3.10.350.10">
    <property type="entry name" value="LysM domain"/>
    <property type="match status" value="1"/>
</dbReference>
<dbReference type="InterPro" id="IPR045030">
    <property type="entry name" value="LYSM1-4"/>
</dbReference>
<dbReference type="InterPro" id="IPR018392">
    <property type="entry name" value="LysM_dom"/>
</dbReference>
<dbReference type="InterPro" id="IPR036779">
    <property type="entry name" value="LysM_dom_sf"/>
</dbReference>
<dbReference type="PANTHER" id="PTHR20932:SF4">
    <property type="entry name" value="AND PUTATIVE PEPTIDOGLYCAN-BINDING DOMAIN-CONTAINING PROTEIN 2-RELATED"/>
    <property type="match status" value="1"/>
</dbReference>
<dbReference type="PANTHER" id="PTHR20932">
    <property type="entry name" value="LYSM AND PUTATIVE PEPTIDOGLYCAN-BINDING DOMAIN-CONTAINING PROTEIN"/>
    <property type="match status" value="1"/>
</dbReference>
<dbReference type="Pfam" id="PF01476">
    <property type="entry name" value="LysM"/>
    <property type="match status" value="1"/>
</dbReference>
<dbReference type="SMART" id="SM00257">
    <property type="entry name" value="LysM"/>
    <property type="match status" value="1"/>
</dbReference>
<dbReference type="SUPFAM" id="SSF54106">
    <property type="entry name" value="LysM domain"/>
    <property type="match status" value="1"/>
</dbReference>
<dbReference type="PROSITE" id="PS51782">
    <property type="entry name" value="LYSM"/>
    <property type="match status" value="1"/>
</dbReference>
<keyword id="KW-1185">Reference proteome</keyword>
<reference key="1">
    <citation type="submission" date="2006-12" db="EMBL/GenBank/DDBJ databases">
        <authorList>
            <consortium name="NIH - Xenopus Gene Collection (XGC) project"/>
        </authorList>
    </citation>
    <scope>NUCLEOTIDE SEQUENCE [LARGE SCALE MRNA]</scope>
    <source>
        <tissue>Ovary</tissue>
        <tissue>Spleen</tissue>
    </source>
</reference>
<accession>Q3KPL3</accession>
<accession>A1A621</accession>
<accession>Q4V815</accession>
<accession>Q6GPX3</accession>
<feature type="chain" id="PRO_0000248005" description="LysM and putative peptidoglycan-binding domain-containing protein 2">
    <location>
        <begin position="1"/>
        <end position="206"/>
    </location>
</feature>
<feature type="domain" description="LysM" evidence="1">
    <location>
        <begin position="59"/>
        <end position="103"/>
    </location>
</feature>
<feature type="region of interest" description="Disordered" evidence="2">
    <location>
        <begin position="184"/>
        <end position="206"/>
    </location>
</feature>
<feature type="compositionally biased region" description="Basic and acidic residues" evidence="2">
    <location>
        <begin position="186"/>
        <end position="197"/>
    </location>
</feature>
<feature type="sequence conflict" description="In Ref. 1; BC072982/BC128920." evidence="3" ref="1">
    <original>R</original>
    <variation>T</variation>
    <location>
        <position position="159"/>
    </location>
</feature>
<organism>
    <name type="scientific">Xenopus laevis</name>
    <name type="common">African clawed frog</name>
    <dbReference type="NCBI Taxonomy" id="8355"/>
    <lineage>
        <taxon>Eukaryota</taxon>
        <taxon>Metazoa</taxon>
        <taxon>Chordata</taxon>
        <taxon>Craniata</taxon>
        <taxon>Vertebrata</taxon>
        <taxon>Euteleostomi</taxon>
        <taxon>Amphibia</taxon>
        <taxon>Batrachia</taxon>
        <taxon>Anura</taxon>
        <taxon>Pipoidea</taxon>
        <taxon>Pipidae</taxon>
        <taxon>Xenopodinae</taxon>
        <taxon>Xenopus</taxon>
        <taxon>Xenopus</taxon>
    </lineage>
</organism>
<sequence length="206" mass="22606">MADLSPVIQPHREGGSRYGYTMFPGLESEAELSLSLASTKTRSYGSTGSVAAPLAERYIEHCLSPSDTLQGIALKYGVTMEQIKRANKLFSTDCIFLRKSLNIPVISKKGSLFNGLGSLDSPENETQDTCSSPTEEPALAESHTVSIDSSAKTNQPIVRSDEELSAKDFLQRLDLQIKRSTQAAQRLKEEDDLRHDGSYATCSYQH</sequence>
<evidence type="ECO:0000255" key="1">
    <source>
        <dbReference type="PROSITE-ProRule" id="PRU01118"/>
    </source>
</evidence>
<evidence type="ECO:0000256" key="2">
    <source>
        <dbReference type="SAM" id="MobiDB-lite"/>
    </source>
</evidence>
<evidence type="ECO:0000305" key="3"/>
<name>LYSM2_XENLA</name>
<gene>
    <name type="primary">lysmd2</name>
</gene>
<protein>
    <recommendedName>
        <fullName>LysM and putative peptidoglycan-binding domain-containing protein 2</fullName>
    </recommendedName>
</protein>